<evidence type="ECO:0000255" key="1">
    <source>
        <dbReference type="HAMAP-Rule" id="MF_00050"/>
    </source>
</evidence>
<feature type="chain" id="PRO_1000117597" description="Elongation factor Ts">
    <location>
        <begin position="1"/>
        <end position="275"/>
    </location>
</feature>
<feature type="region of interest" description="Involved in Mg(2+) ion dislocation from EF-Tu" evidence="1">
    <location>
        <begin position="76"/>
        <end position="79"/>
    </location>
</feature>
<comment type="function">
    <text evidence="1">Associates with the EF-Tu.GDP complex and induces the exchange of GDP to GTP. It remains bound to the aminoacyl-tRNA.EF-Tu.GTP complex up to the GTP hydrolysis stage on the ribosome.</text>
</comment>
<comment type="subcellular location">
    <subcellularLocation>
        <location evidence="1">Cytoplasm</location>
    </subcellularLocation>
</comment>
<comment type="similarity">
    <text evidence="1">Belongs to the EF-Ts family.</text>
</comment>
<organism>
    <name type="scientific">Rhodococcus opacus (strain B4)</name>
    <dbReference type="NCBI Taxonomy" id="632772"/>
    <lineage>
        <taxon>Bacteria</taxon>
        <taxon>Bacillati</taxon>
        <taxon>Actinomycetota</taxon>
        <taxon>Actinomycetes</taxon>
        <taxon>Mycobacteriales</taxon>
        <taxon>Nocardiaceae</taxon>
        <taxon>Rhodococcus</taxon>
    </lineage>
</organism>
<gene>
    <name evidence="1" type="primary">tsf</name>
    <name type="ordered locus">ROP_66130</name>
</gene>
<proteinExistence type="inferred from homology"/>
<reference key="1">
    <citation type="submission" date="2009-03" db="EMBL/GenBank/DDBJ databases">
        <title>Comparison of the complete genome sequences of Rhodococcus erythropolis PR4 and Rhodococcus opacus B4.</title>
        <authorList>
            <person name="Takarada H."/>
            <person name="Sekine M."/>
            <person name="Hosoyama A."/>
            <person name="Yamada R."/>
            <person name="Fujisawa T."/>
            <person name="Omata S."/>
            <person name="Shimizu A."/>
            <person name="Tsukatani N."/>
            <person name="Tanikawa S."/>
            <person name="Fujita N."/>
            <person name="Harayama S."/>
        </authorList>
    </citation>
    <scope>NUCLEOTIDE SEQUENCE [LARGE SCALE GENOMIC DNA]</scope>
    <source>
        <strain>B4</strain>
    </source>
</reference>
<name>EFTS_RHOOB</name>
<sequence>MANYTAADVKRLRELTGSGMMACKNALAEAEGDFDKAVEQLRIKGAKDVGKRAERTTAEGLVVSKDGVLLELDCETDFVAKNEDFLKLAESIVTVAAAAKPADVDALKALELDGKTVDTVIQEQSAKIGEKLVLSKIASFDGPVAVYLHKRSADLPPAVGVLVEYTGEGDAAAEAARGAAMQVAALKAKYVTRDEVPEDIVANERHIAEETARAEGKPEQALPKIIEGRVNGYFKDVVLTEQSSVQDSKKSVKAILDEAGVTIKRFVRFEVGASS</sequence>
<dbReference type="EMBL" id="AP011115">
    <property type="protein sequence ID" value="BAH54860.1"/>
    <property type="molecule type" value="Genomic_DNA"/>
</dbReference>
<dbReference type="RefSeq" id="WP_005259342.1">
    <property type="nucleotide sequence ID" value="NC_012522.1"/>
</dbReference>
<dbReference type="SMR" id="C1B2U3"/>
<dbReference type="STRING" id="632772.ROP_66130"/>
<dbReference type="KEGG" id="rop:ROP_66130"/>
<dbReference type="PATRIC" id="fig|632772.20.peg.6899"/>
<dbReference type="HOGENOM" id="CLU_047155_0_0_11"/>
<dbReference type="OrthoDB" id="9808348at2"/>
<dbReference type="Proteomes" id="UP000002212">
    <property type="component" value="Chromosome"/>
</dbReference>
<dbReference type="GO" id="GO:0005737">
    <property type="term" value="C:cytoplasm"/>
    <property type="evidence" value="ECO:0007669"/>
    <property type="project" value="UniProtKB-SubCell"/>
</dbReference>
<dbReference type="GO" id="GO:0003746">
    <property type="term" value="F:translation elongation factor activity"/>
    <property type="evidence" value="ECO:0007669"/>
    <property type="project" value="UniProtKB-UniRule"/>
</dbReference>
<dbReference type="CDD" id="cd14275">
    <property type="entry name" value="UBA_EF-Ts"/>
    <property type="match status" value="1"/>
</dbReference>
<dbReference type="FunFam" id="1.10.286.20:FF:000001">
    <property type="entry name" value="Elongation factor Ts"/>
    <property type="match status" value="1"/>
</dbReference>
<dbReference type="FunFam" id="1.10.8.10:FF:000001">
    <property type="entry name" value="Elongation factor Ts"/>
    <property type="match status" value="1"/>
</dbReference>
<dbReference type="Gene3D" id="1.10.286.20">
    <property type="match status" value="1"/>
</dbReference>
<dbReference type="Gene3D" id="1.10.8.10">
    <property type="entry name" value="DNA helicase RuvA subunit, C-terminal domain"/>
    <property type="match status" value="1"/>
</dbReference>
<dbReference type="Gene3D" id="3.30.479.20">
    <property type="entry name" value="Elongation factor Ts, dimerisation domain"/>
    <property type="match status" value="2"/>
</dbReference>
<dbReference type="HAMAP" id="MF_00050">
    <property type="entry name" value="EF_Ts"/>
    <property type="match status" value="1"/>
</dbReference>
<dbReference type="InterPro" id="IPR036402">
    <property type="entry name" value="EF-Ts_dimer_sf"/>
</dbReference>
<dbReference type="InterPro" id="IPR001816">
    <property type="entry name" value="Transl_elong_EFTs/EF1B"/>
</dbReference>
<dbReference type="InterPro" id="IPR014039">
    <property type="entry name" value="Transl_elong_EFTs/EF1B_dimer"/>
</dbReference>
<dbReference type="InterPro" id="IPR018101">
    <property type="entry name" value="Transl_elong_Ts_CS"/>
</dbReference>
<dbReference type="InterPro" id="IPR009060">
    <property type="entry name" value="UBA-like_sf"/>
</dbReference>
<dbReference type="NCBIfam" id="TIGR00116">
    <property type="entry name" value="tsf"/>
    <property type="match status" value="1"/>
</dbReference>
<dbReference type="PANTHER" id="PTHR11741">
    <property type="entry name" value="ELONGATION FACTOR TS"/>
    <property type="match status" value="1"/>
</dbReference>
<dbReference type="PANTHER" id="PTHR11741:SF0">
    <property type="entry name" value="ELONGATION FACTOR TS, MITOCHONDRIAL"/>
    <property type="match status" value="1"/>
</dbReference>
<dbReference type="Pfam" id="PF00889">
    <property type="entry name" value="EF_TS"/>
    <property type="match status" value="1"/>
</dbReference>
<dbReference type="SUPFAM" id="SSF54713">
    <property type="entry name" value="Elongation factor Ts (EF-Ts), dimerisation domain"/>
    <property type="match status" value="2"/>
</dbReference>
<dbReference type="SUPFAM" id="SSF46934">
    <property type="entry name" value="UBA-like"/>
    <property type="match status" value="1"/>
</dbReference>
<dbReference type="PROSITE" id="PS01126">
    <property type="entry name" value="EF_TS_1"/>
    <property type="match status" value="1"/>
</dbReference>
<protein>
    <recommendedName>
        <fullName evidence="1">Elongation factor Ts</fullName>
        <shortName evidence="1">EF-Ts</shortName>
    </recommendedName>
</protein>
<keyword id="KW-0963">Cytoplasm</keyword>
<keyword id="KW-0251">Elongation factor</keyword>
<keyword id="KW-0648">Protein biosynthesis</keyword>
<accession>C1B2U3</accession>